<feature type="chain" id="PRO_0000173250" description="Large ribosomal subunit protein bL31B">
    <location>
        <begin position="1"/>
        <end position="87"/>
    </location>
</feature>
<comment type="subunit">
    <text evidence="1">Part of the 50S ribosomal subunit.</text>
</comment>
<comment type="similarity">
    <text evidence="1">Belongs to the bacterial ribosomal protein bL31 family. Type B subfamily.</text>
</comment>
<gene>
    <name evidence="1" type="primary">rpmE2</name>
    <name type="synonym">rpmE</name>
    <name type="ordered locus">RSc1182</name>
    <name type="ORF">RS05714</name>
</gene>
<keyword id="KW-1185">Reference proteome</keyword>
<keyword id="KW-0687">Ribonucleoprotein</keyword>
<keyword id="KW-0689">Ribosomal protein</keyword>
<evidence type="ECO:0000255" key="1">
    <source>
        <dbReference type="HAMAP-Rule" id="MF_00502"/>
    </source>
</evidence>
<evidence type="ECO:0000305" key="2"/>
<reference key="1">
    <citation type="journal article" date="2002" name="Nature">
        <title>Genome sequence of the plant pathogen Ralstonia solanacearum.</title>
        <authorList>
            <person name="Salanoubat M."/>
            <person name="Genin S."/>
            <person name="Artiguenave F."/>
            <person name="Gouzy J."/>
            <person name="Mangenot S."/>
            <person name="Arlat M."/>
            <person name="Billault A."/>
            <person name="Brottier P."/>
            <person name="Camus J.-C."/>
            <person name="Cattolico L."/>
            <person name="Chandler M."/>
            <person name="Choisne N."/>
            <person name="Claudel-Renard C."/>
            <person name="Cunnac S."/>
            <person name="Demange N."/>
            <person name="Gaspin C."/>
            <person name="Lavie M."/>
            <person name="Moisan A."/>
            <person name="Robert C."/>
            <person name="Saurin W."/>
            <person name="Schiex T."/>
            <person name="Siguier P."/>
            <person name="Thebault P."/>
            <person name="Whalen M."/>
            <person name="Wincker P."/>
            <person name="Levy M."/>
            <person name="Weissenbach J."/>
            <person name="Boucher C.A."/>
        </authorList>
    </citation>
    <scope>NUCLEOTIDE SEQUENCE [LARGE SCALE GENOMIC DNA]</scope>
    <source>
        <strain>ATCC BAA-1114 / GMI1000</strain>
    </source>
</reference>
<dbReference type="EMBL" id="AL646052">
    <property type="protein sequence ID" value="CAD14884.1"/>
    <property type="molecule type" value="Genomic_DNA"/>
</dbReference>
<dbReference type="RefSeq" id="WP_011001132.1">
    <property type="nucleotide sequence ID" value="NC_003295.1"/>
</dbReference>
<dbReference type="SMR" id="Q8Y062"/>
<dbReference type="STRING" id="267608.RSc1182"/>
<dbReference type="EnsemblBacteria" id="CAD14884">
    <property type="protein sequence ID" value="CAD14884"/>
    <property type="gene ID" value="RSc1182"/>
</dbReference>
<dbReference type="KEGG" id="rso:RSc1182"/>
<dbReference type="eggNOG" id="COG0254">
    <property type="taxonomic scope" value="Bacteria"/>
</dbReference>
<dbReference type="HOGENOM" id="CLU_114306_2_2_4"/>
<dbReference type="Proteomes" id="UP000001436">
    <property type="component" value="Chromosome"/>
</dbReference>
<dbReference type="GO" id="GO:1990904">
    <property type="term" value="C:ribonucleoprotein complex"/>
    <property type="evidence" value="ECO:0007669"/>
    <property type="project" value="UniProtKB-KW"/>
</dbReference>
<dbReference type="GO" id="GO:0005840">
    <property type="term" value="C:ribosome"/>
    <property type="evidence" value="ECO:0007669"/>
    <property type="project" value="UniProtKB-KW"/>
</dbReference>
<dbReference type="GO" id="GO:0003735">
    <property type="term" value="F:structural constituent of ribosome"/>
    <property type="evidence" value="ECO:0007669"/>
    <property type="project" value="InterPro"/>
</dbReference>
<dbReference type="GO" id="GO:0006412">
    <property type="term" value="P:translation"/>
    <property type="evidence" value="ECO:0007669"/>
    <property type="project" value="UniProtKB-UniRule"/>
</dbReference>
<dbReference type="Gene3D" id="4.10.830.30">
    <property type="entry name" value="Ribosomal protein L31"/>
    <property type="match status" value="1"/>
</dbReference>
<dbReference type="HAMAP" id="MF_00502">
    <property type="entry name" value="Ribosomal_bL31_2"/>
    <property type="match status" value="1"/>
</dbReference>
<dbReference type="InterPro" id="IPR034704">
    <property type="entry name" value="Ribosomal_bL28/bL31-like_sf"/>
</dbReference>
<dbReference type="InterPro" id="IPR002150">
    <property type="entry name" value="Ribosomal_bL31"/>
</dbReference>
<dbReference type="InterPro" id="IPR027493">
    <property type="entry name" value="Ribosomal_bL31_B"/>
</dbReference>
<dbReference type="InterPro" id="IPR042105">
    <property type="entry name" value="Ribosomal_bL31_sf"/>
</dbReference>
<dbReference type="NCBIfam" id="TIGR00105">
    <property type="entry name" value="L31"/>
    <property type="match status" value="1"/>
</dbReference>
<dbReference type="NCBIfam" id="NF002462">
    <property type="entry name" value="PRK01678.1"/>
    <property type="match status" value="1"/>
</dbReference>
<dbReference type="PANTHER" id="PTHR33280">
    <property type="entry name" value="50S RIBOSOMAL PROTEIN L31, CHLOROPLASTIC"/>
    <property type="match status" value="1"/>
</dbReference>
<dbReference type="PANTHER" id="PTHR33280:SF1">
    <property type="entry name" value="LARGE RIBOSOMAL SUBUNIT PROTEIN BL31C"/>
    <property type="match status" value="1"/>
</dbReference>
<dbReference type="Pfam" id="PF01197">
    <property type="entry name" value="Ribosomal_L31"/>
    <property type="match status" value="1"/>
</dbReference>
<dbReference type="PRINTS" id="PR01249">
    <property type="entry name" value="RIBOSOMALL31"/>
</dbReference>
<dbReference type="SUPFAM" id="SSF143800">
    <property type="entry name" value="L28p-like"/>
    <property type="match status" value="1"/>
</dbReference>
<dbReference type="PROSITE" id="PS01143">
    <property type="entry name" value="RIBOSOMAL_L31"/>
    <property type="match status" value="1"/>
</dbReference>
<protein>
    <recommendedName>
        <fullName evidence="1">Large ribosomal subunit protein bL31B</fullName>
    </recommendedName>
    <alternativeName>
        <fullName evidence="2">50S ribosomal protein L31 type B</fullName>
    </alternativeName>
</protein>
<organism>
    <name type="scientific">Ralstonia nicotianae (strain ATCC BAA-1114 / GMI1000)</name>
    <name type="common">Ralstonia solanacearum</name>
    <dbReference type="NCBI Taxonomy" id="267608"/>
    <lineage>
        <taxon>Bacteria</taxon>
        <taxon>Pseudomonadati</taxon>
        <taxon>Pseudomonadota</taxon>
        <taxon>Betaproteobacteria</taxon>
        <taxon>Burkholderiales</taxon>
        <taxon>Burkholderiaceae</taxon>
        <taxon>Ralstonia</taxon>
        <taxon>Ralstonia solanacearum species complex</taxon>
    </lineage>
</organism>
<accession>Q8Y062</accession>
<name>RL31B_RALN1</name>
<proteinExistence type="inferred from homology"/>
<sequence>MKENTHPNYREVVFQDMSSDFSFVTRSTIQTKESIVWKDGKEYPLAKIEVSSESHPFYTGTQKIMDTAGRVEKFRQKFGSKAGKAAK</sequence>